<evidence type="ECO:0000269" key="1">
    <source>
    </source>
</evidence>
<evidence type="ECO:0000303" key="2">
    <source>
    </source>
</evidence>
<evidence type="ECO:0000305" key="3"/>
<evidence type="ECO:0007829" key="4">
    <source>
        <dbReference type="PDB" id="2PLX"/>
    </source>
</evidence>
<protein>
    <recommendedName>
        <fullName evidence="2">Trypsin inhibitor</fullName>
        <shortName evidence="2">VhTI</shortName>
    </recommendedName>
</protein>
<name>TI_VERHE</name>
<sequence length="34" mass="4050">NTDPEQCKVMCYAQRHSSPELLRRCLDNCEKEHD</sequence>
<dbReference type="PDB" id="2CMY">
    <property type="method" value="X-ray"/>
    <property type="resolution" value="2.25 A"/>
    <property type="chains" value="B=1-34"/>
</dbReference>
<dbReference type="PDB" id="2PLX">
    <property type="method" value="X-ray"/>
    <property type="resolution" value="1.56 A"/>
    <property type="chains" value="B=6-31"/>
</dbReference>
<dbReference type="PDBsum" id="2CMY"/>
<dbReference type="PDBsum" id="2PLX"/>
<dbReference type="SMR" id="P85981"/>
<dbReference type="MEROPS" id="I73.001"/>
<dbReference type="GO" id="GO:0005576">
    <property type="term" value="C:extracellular region"/>
    <property type="evidence" value="ECO:0007669"/>
    <property type="project" value="UniProtKB-SubCell"/>
</dbReference>
<dbReference type="GO" id="GO:0004867">
    <property type="term" value="F:serine-type endopeptidase inhibitor activity"/>
    <property type="evidence" value="ECO:0007669"/>
    <property type="project" value="UniProtKB-KW"/>
</dbReference>
<dbReference type="SUPFAM" id="SSF161148">
    <property type="entry name" value="VhTI-like"/>
    <property type="match status" value="1"/>
</dbReference>
<feature type="chain" id="PRO_0000351204" description="Trypsin inhibitor">
    <location>
        <begin position="1"/>
        <end position="34"/>
    </location>
</feature>
<feature type="site" description="Reactive bond for trypsin" evidence="1">
    <location>
        <begin position="15"/>
        <end position="16"/>
    </location>
</feature>
<feature type="disulfide bond" evidence="1">
    <location>
        <begin position="7"/>
        <end position="29"/>
    </location>
</feature>
<feature type="disulfide bond" evidence="1">
    <location>
        <begin position="11"/>
        <end position="25"/>
    </location>
</feature>
<feature type="helix" evidence="4">
    <location>
        <begin position="7"/>
        <end position="13"/>
    </location>
</feature>
<feature type="helix" evidence="4">
    <location>
        <begin position="19"/>
        <end position="29"/>
    </location>
</feature>
<comment type="function">
    <text evidence="1">Inhibits trypsin.</text>
</comment>
<comment type="subcellular location">
    <subcellularLocation>
        <location evidence="3">Secreted</location>
    </subcellularLocation>
</comment>
<comment type="miscellaneous">
    <text evidence="1">Differs dramatically in structure from all previously described families of trypsin inhibitors. Consists of a helix-loop-helix motif with two alpha-helices tightly associated by two disulfide bonds.</text>
</comment>
<accession>P85981</accession>
<proteinExistence type="evidence at protein level"/>
<keyword id="KW-0002">3D-structure</keyword>
<keyword id="KW-0903">Direct protein sequencing</keyword>
<keyword id="KW-1015">Disulfide bond</keyword>
<keyword id="KW-0646">Protease inhibitor</keyword>
<keyword id="KW-0964">Secreted</keyword>
<keyword id="KW-0722">Serine protease inhibitor</keyword>
<organism>
    <name type="scientific">Veronica hederifolia</name>
    <name type="common">Ivy-leaved speedwell</name>
    <dbReference type="NCBI Taxonomy" id="202477"/>
    <lineage>
        <taxon>Eukaryota</taxon>
        <taxon>Viridiplantae</taxon>
        <taxon>Streptophyta</taxon>
        <taxon>Embryophyta</taxon>
        <taxon>Tracheophyta</taxon>
        <taxon>Spermatophyta</taxon>
        <taxon>Magnoliopsida</taxon>
        <taxon>eudicotyledons</taxon>
        <taxon>Gunneridae</taxon>
        <taxon>Pentapetalae</taxon>
        <taxon>asterids</taxon>
        <taxon>lamiids</taxon>
        <taxon>Lamiales</taxon>
        <taxon>Plantaginaceae</taxon>
        <taxon>Veroniceae</taxon>
        <taxon>Veronica</taxon>
        <taxon>Veronica subgen. Cochlidiosperma</taxon>
    </lineage>
</organism>
<reference evidence="3" key="1">
    <citation type="journal article" date="2007" name="J. Biol. Chem.">
        <title>An unusual helix-turn-helix protease inhibitory motif in a novel trypsin inhibitor from seeds of Veronica (Veronica hederifolia L.).</title>
        <authorList>
            <person name="Conners R."/>
            <person name="Konarev A.V."/>
            <person name="Forsyth J."/>
            <person name="Lovegrove A."/>
            <person name="Marsh J."/>
            <person name="Joseph-Horne T."/>
            <person name="Shewry P."/>
            <person name="Brady R.L."/>
        </authorList>
    </citation>
    <scope>PROTEIN SEQUENCE</scope>
    <scope>FUNCTION</scope>
    <scope>REACTIVE BOND</scope>
    <scope>DISULFIDE BONDS</scope>
    <scope>X-RAY CRYSTALLOGRAPHY (1.56 ANGSTROMS) IN COMPLEX WITH BOVINE TRYPSIN</scope>
    <source>
        <tissue evidence="1">Seed</tissue>
    </source>
</reference>